<feature type="chain" id="PRO_1000070862" description="Cytochrome c-type biogenesis protein CcmE">
    <location>
        <begin position="1"/>
        <end position="159"/>
    </location>
</feature>
<feature type="topological domain" description="Cytoplasmic" evidence="1">
    <location>
        <begin position="1"/>
        <end position="8"/>
    </location>
</feature>
<feature type="transmembrane region" description="Helical; Signal-anchor for type II membrane protein" evidence="1">
    <location>
        <begin position="9"/>
        <end position="29"/>
    </location>
</feature>
<feature type="topological domain" description="Periplasmic" evidence="1">
    <location>
        <begin position="30"/>
        <end position="159"/>
    </location>
</feature>
<feature type="region of interest" description="Disordered" evidence="2">
    <location>
        <begin position="132"/>
        <end position="159"/>
    </location>
</feature>
<feature type="compositionally biased region" description="Basic and acidic residues" evidence="2">
    <location>
        <begin position="132"/>
        <end position="147"/>
    </location>
</feature>
<feature type="binding site" description="covalent" evidence="1">
    <location>
        <position position="130"/>
    </location>
    <ligand>
        <name>heme</name>
        <dbReference type="ChEBI" id="CHEBI:30413"/>
    </ligand>
</feature>
<feature type="binding site" description="axial binding residue" evidence="1">
    <location>
        <position position="134"/>
    </location>
    <ligand>
        <name>heme</name>
        <dbReference type="ChEBI" id="CHEBI:30413"/>
    </ligand>
    <ligandPart>
        <name>Fe</name>
        <dbReference type="ChEBI" id="CHEBI:18248"/>
    </ligandPart>
</feature>
<accession>Q0T2S7</accession>
<organism>
    <name type="scientific">Shigella flexneri serotype 5b (strain 8401)</name>
    <dbReference type="NCBI Taxonomy" id="373384"/>
    <lineage>
        <taxon>Bacteria</taxon>
        <taxon>Pseudomonadati</taxon>
        <taxon>Pseudomonadota</taxon>
        <taxon>Gammaproteobacteria</taxon>
        <taxon>Enterobacterales</taxon>
        <taxon>Enterobacteriaceae</taxon>
        <taxon>Shigella</taxon>
    </lineage>
</organism>
<keyword id="KW-0997">Cell inner membrane</keyword>
<keyword id="KW-1003">Cell membrane</keyword>
<keyword id="KW-0201">Cytochrome c-type biogenesis</keyword>
<keyword id="KW-0349">Heme</keyword>
<keyword id="KW-0408">Iron</keyword>
<keyword id="KW-0472">Membrane</keyword>
<keyword id="KW-0479">Metal-binding</keyword>
<keyword id="KW-0735">Signal-anchor</keyword>
<keyword id="KW-0812">Transmembrane</keyword>
<keyword id="KW-1133">Transmembrane helix</keyword>
<protein>
    <recommendedName>
        <fullName evidence="1">Cytochrome c-type biogenesis protein CcmE</fullName>
    </recommendedName>
    <alternativeName>
        <fullName evidence="1">Cytochrome c maturation protein E</fullName>
    </alternativeName>
    <alternativeName>
        <fullName evidence="1">Heme chaperone CcmE</fullName>
    </alternativeName>
</protein>
<gene>
    <name evidence="1" type="primary">ccmE</name>
    <name evidence="1" type="synonym">cycJ</name>
    <name type="ordered locus">SFV_2273</name>
</gene>
<evidence type="ECO:0000255" key="1">
    <source>
        <dbReference type="HAMAP-Rule" id="MF_01959"/>
    </source>
</evidence>
<evidence type="ECO:0000256" key="2">
    <source>
        <dbReference type="SAM" id="MobiDB-lite"/>
    </source>
</evidence>
<reference key="1">
    <citation type="journal article" date="2006" name="BMC Genomics">
        <title>Complete genome sequence of Shigella flexneri 5b and comparison with Shigella flexneri 2a.</title>
        <authorList>
            <person name="Nie H."/>
            <person name="Yang F."/>
            <person name="Zhang X."/>
            <person name="Yang J."/>
            <person name="Chen L."/>
            <person name="Wang J."/>
            <person name="Xiong Z."/>
            <person name="Peng J."/>
            <person name="Sun L."/>
            <person name="Dong J."/>
            <person name="Xue Y."/>
            <person name="Xu X."/>
            <person name="Chen S."/>
            <person name="Yao Z."/>
            <person name="Shen Y."/>
            <person name="Jin Q."/>
        </authorList>
    </citation>
    <scope>NUCLEOTIDE SEQUENCE [LARGE SCALE GENOMIC DNA]</scope>
    <source>
        <strain>8401</strain>
    </source>
</reference>
<dbReference type="EMBL" id="CP000266">
    <property type="protein sequence ID" value="ABF04388.1"/>
    <property type="molecule type" value="Genomic_DNA"/>
</dbReference>
<dbReference type="RefSeq" id="WP_001026418.1">
    <property type="nucleotide sequence ID" value="NC_008258.1"/>
</dbReference>
<dbReference type="SMR" id="Q0T2S7"/>
<dbReference type="GeneID" id="86860369"/>
<dbReference type="KEGG" id="sfv:SFV_2273"/>
<dbReference type="HOGENOM" id="CLU_079503_1_0_6"/>
<dbReference type="Proteomes" id="UP000000659">
    <property type="component" value="Chromosome"/>
</dbReference>
<dbReference type="GO" id="GO:0005886">
    <property type="term" value="C:plasma membrane"/>
    <property type="evidence" value="ECO:0007669"/>
    <property type="project" value="UniProtKB-SubCell"/>
</dbReference>
<dbReference type="GO" id="GO:0020037">
    <property type="term" value="F:heme binding"/>
    <property type="evidence" value="ECO:0007669"/>
    <property type="project" value="InterPro"/>
</dbReference>
<dbReference type="GO" id="GO:0046872">
    <property type="term" value="F:metal ion binding"/>
    <property type="evidence" value="ECO:0007669"/>
    <property type="project" value="UniProtKB-KW"/>
</dbReference>
<dbReference type="GO" id="GO:0017004">
    <property type="term" value="P:cytochrome complex assembly"/>
    <property type="evidence" value="ECO:0007669"/>
    <property type="project" value="UniProtKB-KW"/>
</dbReference>
<dbReference type="FunFam" id="2.40.50.140:FF:000104">
    <property type="entry name" value="Cytochrome c-type biogenesis protein CcmE"/>
    <property type="match status" value="1"/>
</dbReference>
<dbReference type="Gene3D" id="2.40.50.140">
    <property type="entry name" value="Nucleic acid-binding proteins"/>
    <property type="match status" value="1"/>
</dbReference>
<dbReference type="HAMAP" id="MF_01959">
    <property type="entry name" value="CcmE"/>
    <property type="match status" value="1"/>
</dbReference>
<dbReference type="InterPro" id="IPR004329">
    <property type="entry name" value="CcmE"/>
</dbReference>
<dbReference type="InterPro" id="IPR036127">
    <property type="entry name" value="CcmE-like_sf"/>
</dbReference>
<dbReference type="InterPro" id="IPR012340">
    <property type="entry name" value="NA-bd_OB-fold"/>
</dbReference>
<dbReference type="NCBIfam" id="NF009635">
    <property type="entry name" value="PRK13150.1"/>
    <property type="match status" value="1"/>
</dbReference>
<dbReference type="NCBIfam" id="NF009638">
    <property type="entry name" value="PRK13165.1"/>
    <property type="match status" value="1"/>
</dbReference>
<dbReference type="NCBIfam" id="NF009727">
    <property type="entry name" value="PRK13254.1-1"/>
    <property type="match status" value="1"/>
</dbReference>
<dbReference type="NCBIfam" id="NF009729">
    <property type="entry name" value="PRK13254.1-3"/>
    <property type="match status" value="1"/>
</dbReference>
<dbReference type="PANTHER" id="PTHR34128">
    <property type="entry name" value="CYTOCHROME C-TYPE BIOGENESIS PROTEIN CCME HOMOLOG, MITOCHONDRIAL"/>
    <property type="match status" value="1"/>
</dbReference>
<dbReference type="PANTHER" id="PTHR34128:SF2">
    <property type="entry name" value="CYTOCHROME C-TYPE BIOGENESIS PROTEIN CCME HOMOLOG, MITOCHONDRIAL"/>
    <property type="match status" value="1"/>
</dbReference>
<dbReference type="Pfam" id="PF03100">
    <property type="entry name" value="CcmE"/>
    <property type="match status" value="1"/>
</dbReference>
<dbReference type="SUPFAM" id="SSF82093">
    <property type="entry name" value="Heme chaperone CcmE"/>
    <property type="match status" value="1"/>
</dbReference>
<proteinExistence type="inferred from homology"/>
<comment type="function">
    <text evidence="1">Heme chaperone required for the biogenesis of c-type cytochromes. Transiently binds heme delivered by CcmC and transfers the heme to apo-cytochromes in a process facilitated by CcmF and CcmH.</text>
</comment>
<comment type="subcellular location">
    <subcellularLocation>
        <location evidence="1">Cell inner membrane</location>
        <topology evidence="1">Single-pass type II membrane protein</topology>
        <orientation evidence="1">Periplasmic side</orientation>
    </subcellularLocation>
</comment>
<comment type="similarity">
    <text evidence="1">Belongs to the CcmE/CycJ family.</text>
</comment>
<name>CCME_SHIF8</name>
<sequence>MNIRRKNRLWIACAVLAGLALTIGLVLYALRSNIDLFYTPGEILYGKRETQQMPEVGQRLRVGGMVMPGSVQRDPNSLKVTFTIYDAEGSVDVSYEGILPDLFREGQGVVVQGELEKGNHILAKEVLAKHDENYTPPEVEKAMEANHRRPASVYKDPAS</sequence>